<comment type="function">
    <text evidence="1">Reversibly transfers an adenylyl group from ATP to 4'-phosphopantetheine, yielding dephospho-CoA (dPCoA) and pyrophosphate.</text>
</comment>
<comment type="catalytic activity">
    <reaction evidence="1">
        <text>(R)-4'-phosphopantetheine + ATP + H(+) = 3'-dephospho-CoA + diphosphate</text>
        <dbReference type="Rhea" id="RHEA:19801"/>
        <dbReference type="ChEBI" id="CHEBI:15378"/>
        <dbReference type="ChEBI" id="CHEBI:30616"/>
        <dbReference type="ChEBI" id="CHEBI:33019"/>
        <dbReference type="ChEBI" id="CHEBI:57328"/>
        <dbReference type="ChEBI" id="CHEBI:61723"/>
        <dbReference type="EC" id="2.7.7.3"/>
    </reaction>
</comment>
<comment type="cofactor">
    <cofactor evidence="1">
        <name>Mg(2+)</name>
        <dbReference type="ChEBI" id="CHEBI:18420"/>
    </cofactor>
</comment>
<comment type="pathway">
    <text evidence="1">Cofactor biosynthesis; coenzyme A biosynthesis; CoA from (R)-pantothenate: step 4/5.</text>
</comment>
<comment type="subunit">
    <text evidence="1">Homohexamer.</text>
</comment>
<comment type="subcellular location">
    <subcellularLocation>
        <location evidence="1">Cytoplasm</location>
    </subcellularLocation>
</comment>
<comment type="similarity">
    <text evidence="1">Belongs to the bacterial CoaD family.</text>
</comment>
<keyword id="KW-0067">ATP-binding</keyword>
<keyword id="KW-0173">Coenzyme A biosynthesis</keyword>
<keyword id="KW-0963">Cytoplasm</keyword>
<keyword id="KW-0460">Magnesium</keyword>
<keyword id="KW-0547">Nucleotide-binding</keyword>
<keyword id="KW-0548">Nucleotidyltransferase</keyword>
<keyword id="KW-1185">Reference proteome</keyword>
<keyword id="KW-0808">Transferase</keyword>
<evidence type="ECO:0000255" key="1">
    <source>
        <dbReference type="HAMAP-Rule" id="MF_00151"/>
    </source>
</evidence>
<proteinExistence type="inferred from homology"/>
<dbReference type="EC" id="2.7.7.3" evidence="1"/>
<dbReference type="EMBL" id="CP000569">
    <property type="protein sequence ID" value="ABN74223.1"/>
    <property type="molecule type" value="Genomic_DNA"/>
</dbReference>
<dbReference type="RefSeq" id="WP_005601610.1">
    <property type="nucleotide sequence ID" value="NC_009053.1"/>
</dbReference>
<dbReference type="SMR" id="A3N1D7"/>
<dbReference type="STRING" id="416269.APL_1133"/>
<dbReference type="EnsemblBacteria" id="ABN74223">
    <property type="protein sequence ID" value="ABN74223"/>
    <property type="gene ID" value="APL_1133"/>
</dbReference>
<dbReference type="KEGG" id="apl:APL_1133"/>
<dbReference type="eggNOG" id="COG0669">
    <property type="taxonomic scope" value="Bacteria"/>
</dbReference>
<dbReference type="HOGENOM" id="CLU_100149_0_1_6"/>
<dbReference type="UniPathway" id="UPA00241">
    <property type="reaction ID" value="UER00355"/>
</dbReference>
<dbReference type="Proteomes" id="UP000001432">
    <property type="component" value="Chromosome"/>
</dbReference>
<dbReference type="GO" id="GO:0005737">
    <property type="term" value="C:cytoplasm"/>
    <property type="evidence" value="ECO:0007669"/>
    <property type="project" value="UniProtKB-SubCell"/>
</dbReference>
<dbReference type="GO" id="GO:0005524">
    <property type="term" value="F:ATP binding"/>
    <property type="evidence" value="ECO:0007669"/>
    <property type="project" value="UniProtKB-KW"/>
</dbReference>
<dbReference type="GO" id="GO:0004595">
    <property type="term" value="F:pantetheine-phosphate adenylyltransferase activity"/>
    <property type="evidence" value="ECO:0007669"/>
    <property type="project" value="UniProtKB-UniRule"/>
</dbReference>
<dbReference type="GO" id="GO:0015937">
    <property type="term" value="P:coenzyme A biosynthetic process"/>
    <property type="evidence" value="ECO:0007669"/>
    <property type="project" value="UniProtKB-UniRule"/>
</dbReference>
<dbReference type="CDD" id="cd02163">
    <property type="entry name" value="PPAT"/>
    <property type="match status" value="1"/>
</dbReference>
<dbReference type="Gene3D" id="3.40.50.620">
    <property type="entry name" value="HUPs"/>
    <property type="match status" value="1"/>
</dbReference>
<dbReference type="HAMAP" id="MF_00151">
    <property type="entry name" value="PPAT_bact"/>
    <property type="match status" value="1"/>
</dbReference>
<dbReference type="InterPro" id="IPR004821">
    <property type="entry name" value="Cyt_trans-like"/>
</dbReference>
<dbReference type="InterPro" id="IPR001980">
    <property type="entry name" value="PPAT"/>
</dbReference>
<dbReference type="InterPro" id="IPR014729">
    <property type="entry name" value="Rossmann-like_a/b/a_fold"/>
</dbReference>
<dbReference type="NCBIfam" id="TIGR01510">
    <property type="entry name" value="coaD_prev_kdtB"/>
    <property type="match status" value="1"/>
</dbReference>
<dbReference type="NCBIfam" id="TIGR00125">
    <property type="entry name" value="cyt_tran_rel"/>
    <property type="match status" value="1"/>
</dbReference>
<dbReference type="PANTHER" id="PTHR21342">
    <property type="entry name" value="PHOSPHOPANTETHEINE ADENYLYLTRANSFERASE"/>
    <property type="match status" value="1"/>
</dbReference>
<dbReference type="PANTHER" id="PTHR21342:SF1">
    <property type="entry name" value="PHOSPHOPANTETHEINE ADENYLYLTRANSFERASE"/>
    <property type="match status" value="1"/>
</dbReference>
<dbReference type="Pfam" id="PF01467">
    <property type="entry name" value="CTP_transf_like"/>
    <property type="match status" value="1"/>
</dbReference>
<dbReference type="PRINTS" id="PR01020">
    <property type="entry name" value="LPSBIOSNTHSS"/>
</dbReference>
<dbReference type="SUPFAM" id="SSF52374">
    <property type="entry name" value="Nucleotidylyl transferase"/>
    <property type="match status" value="1"/>
</dbReference>
<organism>
    <name type="scientific">Actinobacillus pleuropneumoniae serotype 5b (strain L20)</name>
    <dbReference type="NCBI Taxonomy" id="416269"/>
    <lineage>
        <taxon>Bacteria</taxon>
        <taxon>Pseudomonadati</taxon>
        <taxon>Pseudomonadota</taxon>
        <taxon>Gammaproteobacteria</taxon>
        <taxon>Pasteurellales</taxon>
        <taxon>Pasteurellaceae</taxon>
        <taxon>Actinobacillus</taxon>
    </lineage>
</organism>
<accession>A3N1D7</accession>
<feature type="chain" id="PRO_1000011085" description="Phosphopantetheine adenylyltransferase">
    <location>
        <begin position="1"/>
        <end position="158"/>
    </location>
</feature>
<feature type="binding site" evidence="1">
    <location>
        <begin position="10"/>
        <end position="11"/>
    </location>
    <ligand>
        <name>ATP</name>
        <dbReference type="ChEBI" id="CHEBI:30616"/>
    </ligand>
</feature>
<feature type="binding site" evidence="1">
    <location>
        <position position="10"/>
    </location>
    <ligand>
        <name>substrate</name>
    </ligand>
</feature>
<feature type="binding site" evidence="1">
    <location>
        <position position="18"/>
    </location>
    <ligand>
        <name>ATP</name>
        <dbReference type="ChEBI" id="CHEBI:30616"/>
    </ligand>
</feature>
<feature type="binding site" evidence="1">
    <location>
        <position position="42"/>
    </location>
    <ligand>
        <name>substrate</name>
    </ligand>
</feature>
<feature type="binding site" evidence="1">
    <location>
        <position position="74"/>
    </location>
    <ligand>
        <name>substrate</name>
    </ligand>
</feature>
<feature type="binding site" evidence="1">
    <location>
        <position position="88"/>
    </location>
    <ligand>
        <name>substrate</name>
    </ligand>
</feature>
<feature type="binding site" evidence="1">
    <location>
        <begin position="89"/>
        <end position="91"/>
    </location>
    <ligand>
        <name>ATP</name>
        <dbReference type="ChEBI" id="CHEBI:30616"/>
    </ligand>
</feature>
<feature type="binding site" evidence="1">
    <location>
        <position position="99"/>
    </location>
    <ligand>
        <name>ATP</name>
        <dbReference type="ChEBI" id="CHEBI:30616"/>
    </ligand>
</feature>
<feature type="binding site" evidence="1">
    <location>
        <begin position="124"/>
        <end position="130"/>
    </location>
    <ligand>
        <name>ATP</name>
        <dbReference type="ChEBI" id="CHEBI:30616"/>
    </ligand>
</feature>
<feature type="site" description="Transition state stabilizer" evidence="1">
    <location>
        <position position="18"/>
    </location>
</feature>
<gene>
    <name evidence="1" type="primary">coaD</name>
    <name type="ordered locus">APL_1133</name>
</gene>
<name>COAD_ACTP2</name>
<protein>
    <recommendedName>
        <fullName evidence="1">Phosphopantetheine adenylyltransferase</fullName>
        <ecNumber evidence="1">2.7.7.3</ecNumber>
    </recommendedName>
    <alternativeName>
        <fullName evidence="1">Dephospho-CoA pyrophosphorylase</fullName>
    </alternativeName>
    <alternativeName>
        <fullName evidence="1">Pantetheine-phosphate adenylyltransferase</fullName>
        <shortName evidence="1">PPAT</shortName>
    </alternativeName>
</protein>
<sequence length="158" mass="17586">MSYTVIYAGTFDPMTNGHLDIIERASELFGQVIVAVAKNPSKQPLFSFEERTALVRQSCAHLANVQAVGFSGLLADFAKQHQAKALVRGIRGSDDIEYEIQLAQLNDKLSGRLDTVFLPPSVTWRYLSSTMVREIYRHQGDVAQFVPNAVLCALKEKE</sequence>
<reference key="1">
    <citation type="journal article" date="2008" name="J. Bacteriol.">
        <title>The complete genome sequence of Actinobacillus pleuropneumoniae L20 (serotype 5b).</title>
        <authorList>
            <person name="Foote S.J."/>
            <person name="Bosse J.T."/>
            <person name="Bouevitch A.B."/>
            <person name="Langford P.R."/>
            <person name="Young N.M."/>
            <person name="Nash J.H.E."/>
        </authorList>
    </citation>
    <scope>NUCLEOTIDE SEQUENCE [LARGE SCALE GENOMIC DNA]</scope>
    <source>
        <strain>L20</strain>
    </source>
</reference>